<proteinExistence type="evidence at transcript level"/>
<feature type="chain" id="PRO_0000280723" description="GATOR2 complex protein WDR59">
    <location>
        <begin position="1"/>
        <end position="973"/>
    </location>
</feature>
<feature type="repeat" description="WD 1">
    <location>
        <begin position="57"/>
        <end position="98"/>
    </location>
</feature>
<feature type="repeat" description="WD 2">
    <location>
        <begin position="103"/>
        <end position="143"/>
    </location>
</feature>
<feature type="repeat" description="WD 3">
    <location>
        <begin position="146"/>
        <end position="185"/>
    </location>
</feature>
<feature type="repeat" description="WD 4">
    <location>
        <begin position="189"/>
        <end position="229"/>
    </location>
</feature>
<feature type="repeat" description="WD 5">
    <location>
        <begin position="232"/>
        <end position="276"/>
    </location>
</feature>
<feature type="repeat" description="WD 6">
    <location>
        <begin position="280"/>
        <end position="324"/>
    </location>
</feature>
<feature type="domain" description="RWD" evidence="3">
    <location>
        <begin position="393"/>
        <end position="494"/>
    </location>
</feature>
<feature type="zinc finger region" description="C4-type" evidence="1">
    <location>
        <begin position="900"/>
        <end position="920"/>
    </location>
</feature>
<feature type="zinc finger region" description="RING-type; atypical" evidence="1">
    <location>
        <begin position="921"/>
        <end position="970"/>
    </location>
</feature>
<feature type="region of interest" description="Disordered" evidence="4">
    <location>
        <begin position="346"/>
        <end position="365"/>
    </location>
</feature>
<feature type="compositionally biased region" description="Polar residues" evidence="4">
    <location>
        <begin position="351"/>
        <end position="360"/>
    </location>
</feature>
<feature type="binding site" evidence="1">
    <location>
        <position position="901"/>
    </location>
    <ligand>
        <name>Zn(2+)</name>
        <dbReference type="ChEBI" id="CHEBI:29105"/>
        <label>1</label>
    </ligand>
</feature>
<feature type="binding site" evidence="1">
    <location>
        <position position="904"/>
    </location>
    <ligand>
        <name>Zn(2+)</name>
        <dbReference type="ChEBI" id="CHEBI:29105"/>
        <label>1</label>
    </ligand>
</feature>
<feature type="binding site" evidence="1">
    <location>
        <position position="913"/>
    </location>
    <ligand>
        <name>Zn(2+)</name>
        <dbReference type="ChEBI" id="CHEBI:29105"/>
        <label>1</label>
    </ligand>
</feature>
<feature type="binding site" evidence="1">
    <location>
        <position position="916"/>
    </location>
    <ligand>
        <name>Zn(2+)</name>
        <dbReference type="ChEBI" id="CHEBI:29105"/>
        <label>1</label>
    </ligand>
</feature>
<feature type="binding site" evidence="1">
    <location>
        <position position="926"/>
    </location>
    <ligand>
        <name>Zn(2+)</name>
        <dbReference type="ChEBI" id="CHEBI:29105"/>
        <label>2</label>
    </ligand>
</feature>
<feature type="binding site" evidence="1">
    <location>
        <position position="937"/>
    </location>
    <ligand>
        <name>Zn(2+)</name>
        <dbReference type="ChEBI" id="CHEBI:29105"/>
        <label>3</label>
    </ligand>
</feature>
<feature type="binding site" evidence="1">
    <location>
        <position position="942"/>
    </location>
    <ligand>
        <name>Zn(2+)</name>
        <dbReference type="ChEBI" id="CHEBI:29105"/>
        <label>4</label>
    </ligand>
</feature>
<feature type="binding site" evidence="1">
    <location>
        <position position="945"/>
    </location>
    <ligand>
        <name>Zn(2+)</name>
        <dbReference type="ChEBI" id="CHEBI:29105"/>
        <label>2</label>
    </ligand>
</feature>
<feature type="binding site" evidence="1">
    <location>
        <position position="948"/>
    </location>
    <ligand>
        <name>Zn(2+)</name>
        <dbReference type="ChEBI" id="CHEBI:29105"/>
        <label>2</label>
    </ligand>
</feature>
<feature type="binding site" evidence="1">
    <location>
        <position position="959"/>
    </location>
    <ligand>
        <name>Zn(2+)</name>
        <dbReference type="ChEBI" id="CHEBI:29105"/>
        <label>4</label>
    </ligand>
</feature>
<feature type="binding site" evidence="1">
    <location>
        <position position="963"/>
    </location>
    <ligand>
        <name>Zn(2+)</name>
        <dbReference type="ChEBI" id="CHEBI:29105"/>
        <label>4</label>
    </ligand>
</feature>
<feature type="binding site" evidence="1">
    <location>
        <position position="965"/>
    </location>
    <ligand>
        <name>Zn(2+)</name>
        <dbReference type="ChEBI" id="CHEBI:29105"/>
        <label>3</label>
    </ligand>
</feature>
<feature type="binding site" evidence="1">
    <location>
        <position position="967"/>
    </location>
    <ligand>
        <name>Zn(2+)</name>
        <dbReference type="ChEBI" id="CHEBI:29105"/>
        <label>3</label>
    </ligand>
</feature>
<dbReference type="EMBL" id="AJ719765">
    <property type="protein sequence ID" value="CAG31424.1"/>
    <property type="molecule type" value="mRNA"/>
</dbReference>
<dbReference type="RefSeq" id="NP_001012794.1">
    <property type="nucleotide sequence ID" value="NM_001012776.2"/>
</dbReference>
<dbReference type="SMR" id="Q5ZLG9"/>
<dbReference type="FunCoup" id="Q5ZLG9">
    <property type="interactions" value="1202"/>
</dbReference>
<dbReference type="STRING" id="9031.ENSGALP00000004419"/>
<dbReference type="GlyGen" id="Q5ZLG9">
    <property type="glycosylation" value="2 sites"/>
</dbReference>
<dbReference type="PaxDb" id="9031-ENSGALP00000004419"/>
<dbReference type="GeneID" id="415688"/>
<dbReference type="KEGG" id="gga:415688"/>
<dbReference type="CTD" id="79726"/>
<dbReference type="VEuPathDB" id="HostDB:geneid_415688"/>
<dbReference type="eggNOG" id="KOG0264">
    <property type="taxonomic scope" value="Eukaryota"/>
</dbReference>
<dbReference type="eggNOG" id="KOG0309">
    <property type="taxonomic scope" value="Eukaryota"/>
</dbReference>
<dbReference type="HOGENOM" id="CLU_009370_0_0_1"/>
<dbReference type="InParanoid" id="Q5ZLG9"/>
<dbReference type="OrthoDB" id="311712at2759"/>
<dbReference type="PhylomeDB" id="Q5ZLG9"/>
<dbReference type="TreeFam" id="TF314695"/>
<dbReference type="Reactome" id="R-GGA-9639288">
    <property type="pathway name" value="Amino acids regulate mTORC1"/>
</dbReference>
<dbReference type="PRO" id="PR:Q5ZLG9"/>
<dbReference type="Proteomes" id="UP000000539">
    <property type="component" value="Chromosome 11"/>
</dbReference>
<dbReference type="Bgee" id="ENSGALG00000002798">
    <property type="expression patterns" value="Expressed in testis and 13 other cell types or tissues"/>
</dbReference>
<dbReference type="GO" id="GO:0061700">
    <property type="term" value="C:GATOR2 complex"/>
    <property type="evidence" value="ECO:0000250"/>
    <property type="project" value="UniProtKB"/>
</dbReference>
<dbReference type="GO" id="GO:0005765">
    <property type="term" value="C:lysosomal membrane"/>
    <property type="evidence" value="ECO:0000250"/>
    <property type="project" value="UniProtKB"/>
</dbReference>
<dbReference type="GO" id="GO:0035859">
    <property type="term" value="C:Seh1-associated complex"/>
    <property type="evidence" value="ECO:0000318"/>
    <property type="project" value="GO_Central"/>
</dbReference>
<dbReference type="GO" id="GO:0005774">
    <property type="term" value="C:vacuolar membrane"/>
    <property type="evidence" value="ECO:0000318"/>
    <property type="project" value="GO_Central"/>
</dbReference>
<dbReference type="GO" id="GO:0035591">
    <property type="term" value="F:signaling adaptor activity"/>
    <property type="evidence" value="ECO:0000318"/>
    <property type="project" value="GO_Central"/>
</dbReference>
<dbReference type="GO" id="GO:0008270">
    <property type="term" value="F:zinc ion binding"/>
    <property type="evidence" value="ECO:0007669"/>
    <property type="project" value="UniProtKB-KW"/>
</dbReference>
<dbReference type="GO" id="GO:0034198">
    <property type="term" value="P:cellular response to amino acid starvation"/>
    <property type="evidence" value="ECO:0000318"/>
    <property type="project" value="GO_Central"/>
</dbReference>
<dbReference type="GO" id="GO:0031669">
    <property type="term" value="P:cellular response to nutrient levels"/>
    <property type="evidence" value="ECO:0000250"/>
    <property type="project" value="UniProtKB"/>
</dbReference>
<dbReference type="GO" id="GO:1904263">
    <property type="term" value="P:positive regulation of TORC1 signaling"/>
    <property type="evidence" value="ECO:0000250"/>
    <property type="project" value="UniProtKB"/>
</dbReference>
<dbReference type="CDD" id="cd16692">
    <property type="entry name" value="mRING-H2-C3H3C2_WDR59"/>
    <property type="match status" value="1"/>
</dbReference>
<dbReference type="FunFam" id="2.130.10.10:FF:000266">
    <property type="entry name" value="WD repeat-containing protein 59 isoform X1"/>
    <property type="match status" value="1"/>
</dbReference>
<dbReference type="Gene3D" id="2.130.10.10">
    <property type="entry name" value="YVTN repeat-like/Quinoprotein amine dehydrogenase"/>
    <property type="match status" value="2"/>
</dbReference>
<dbReference type="InterPro" id="IPR006575">
    <property type="entry name" value="RWD_dom"/>
</dbReference>
<dbReference type="InterPro" id="IPR016135">
    <property type="entry name" value="UBQ-conjugating_enzyme/RWD"/>
</dbReference>
<dbReference type="InterPro" id="IPR015943">
    <property type="entry name" value="WD40/YVTN_repeat-like_dom_sf"/>
</dbReference>
<dbReference type="InterPro" id="IPR019775">
    <property type="entry name" value="WD40_repeat_CS"/>
</dbReference>
<dbReference type="InterPro" id="IPR036322">
    <property type="entry name" value="WD40_repeat_dom_sf"/>
</dbReference>
<dbReference type="InterPro" id="IPR001680">
    <property type="entry name" value="WD40_rpt"/>
</dbReference>
<dbReference type="InterPro" id="IPR049567">
    <property type="entry name" value="WDR59-like"/>
</dbReference>
<dbReference type="InterPro" id="IPR039456">
    <property type="entry name" value="WDR59_mRING-H2-C3H3C2"/>
</dbReference>
<dbReference type="InterPro" id="IPR049566">
    <property type="entry name" value="WDR59_RTC1-like_RING_Znf"/>
</dbReference>
<dbReference type="PANTHER" id="PTHR46170">
    <property type="entry name" value="GATOR COMPLEX PROTEIN WDR59"/>
    <property type="match status" value="1"/>
</dbReference>
<dbReference type="PANTHER" id="PTHR46170:SF1">
    <property type="entry name" value="GATOR COMPLEX PROTEIN WDR59"/>
    <property type="match status" value="1"/>
</dbReference>
<dbReference type="Pfam" id="PF00400">
    <property type="entry name" value="WD40"/>
    <property type="match status" value="2"/>
</dbReference>
<dbReference type="Pfam" id="PF17120">
    <property type="entry name" value="zf-RING_16"/>
    <property type="match status" value="1"/>
</dbReference>
<dbReference type="SMART" id="SM00591">
    <property type="entry name" value="RWD"/>
    <property type="match status" value="1"/>
</dbReference>
<dbReference type="SMART" id="SM00320">
    <property type="entry name" value="WD40"/>
    <property type="match status" value="4"/>
</dbReference>
<dbReference type="SUPFAM" id="SSF54495">
    <property type="entry name" value="UBC-like"/>
    <property type="match status" value="1"/>
</dbReference>
<dbReference type="SUPFAM" id="SSF50978">
    <property type="entry name" value="WD40 repeat-like"/>
    <property type="match status" value="1"/>
</dbReference>
<dbReference type="PROSITE" id="PS50908">
    <property type="entry name" value="RWD"/>
    <property type="match status" value="1"/>
</dbReference>
<dbReference type="PROSITE" id="PS00678">
    <property type="entry name" value="WD_REPEATS_1"/>
    <property type="match status" value="1"/>
</dbReference>
<dbReference type="PROSITE" id="PS50082">
    <property type="entry name" value="WD_REPEATS_2"/>
    <property type="match status" value="2"/>
</dbReference>
<dbReference type="PROSITE" id="PS50294">
    <property type="entry name" value="WD_REPEATS_REGION"/>
    <property type="match status" value="1"/>
</dbReference>
<comment type="function">
    <text evidence="1">As a component of the GATOR2 complex, functions as an activator of the amino acid-sensing branch of the mTORC1 signaling pathway. The GATOR2 complex indirectly activates mTORC1 through the inhibition of the GATOR1 subcomplex. GATOR2 probably acts as an E3 ubiquitin-protein ligase toward GATOR1. In the presence of abundant amino acids, the GATOR2 complex mediates ubiquitination of the NPRL2 core component of the GATOR1 complex, leading to GATOR1 inactivation. In the absence of amino acids, GATOR2 is inhibited, activating the GATOR1 complex.</text>
</comment>
<comment type="activity regulation">
    <text evidence="1">The GATOR2 complex is negatively regulated by the upstream amino acid sensors CASTOR1 and SESN2, which sequester the GATOR2 complex in absence of amino acids. In the presence of abundant amino acids, GATOR2 is released from CASTOR1 and SESN2 and activated.</text>
</comment>
<comment type="subunit">
    <text evidence="1 2">Component of the GATOR2 subcomplex, composed of MIOS, SEC13, SEH1L, WDR24 and WDR59. The GATOR2 complex interacts with CASTOR1 and CASTOR2; the interaction is negatively regulated by arginine. The GATOR2 complex interacts with SESN1, SESN2 and SESN3; the interaction is negatively regulated by amino acids (By similarity). Interacts with DDB1-CUL4A/B E3 ligase complexes (By similarity).</text>
</comment>
<comment type="subcellular location">
    <subcellularLocation>
        <location evidence="1">Lysosome membrane</location>
    </subcellularLocation>
</comment>
<comment type="similarity">
    <text evidence="5">Belongs to the WD repeat WDR59 family.</text>
</comment>
<organism>
    <name type="scientific">Gallus gallus</name>
    <name type="common">Chicken</name>
    <dbReference type="NCBI Taxonomy" id="9031"/>
    <lineage>
        <taxon>Eukaryota</taxon>
        <taxon>Metazoa</taxon>
        <taxon>Chordata</taxon>
        <taxon>Craniata</taxon>
        <taxon>Vertebrata</taxon>
        <taxon>Euteleostomi</taxon>
        <taxon>Archelosauria</taxon>
        <taxon>Archosauria</taxon>
        <taxon>Dinosauria</taxon>
        <taxon>Saurischia</taxon>
        <taxon>Theropoda</taxon>
        <taxon>Coelurosauria</taxon>
        <taxon>Aves</taxon>
        <taxon>Neognathae</taxon>
        <taxon>Galloanserae</taxon>
        <taxon>Galliformes</taxon>
        <taxon>Phasianidae</taxon>
        <taxon>Phasianinae</taxon>
        <taxon>Gallus</taxon>
    </lineage>
</organism>
<protein>
    <recommendedName>
        <fullName evidence="5">GATOR2 complex protein WDR59</fullName>
    </recommendedName>
</protein>
<reference key="1">
    <citation type="journal article" date="2005" name="Genome Biol.">
        <title>Full-length cDNAs from chicken bursal lymphocytes to facilitate gene function analysis.</title>
        <authorList>
            <person name="Caldwell R.B."/>
            <person name="Kierzek A.M."/>
            <person name="Arakawa H."/>
            <person name="Bezzubov Y."/>
            <person name="Zaim J."/>
            <person name="Fiedler P."/>
            <person name="Kutter S."/>
            <person name="Blagodatski A."/>
            <person name="Kostovska D."/>
            <person name="Koter M."/>
            <person name="Plachy J."/>
            <person name="Carninci P."/>
            <person name="Hayashizaki Y."/>
            <person name="Buerstedde J.-M."/>
        </authorList>
    </citation>
    <scope>NUCLEOTIDE SEQUENCE [LARGE SCALE MRNA]</scope>
    <source>
        <strain>CB</strain>
        <tissue>Bursa of Fabricius</tissue>
    </source>
</reference>
<name>WDR59_CHICK</name>
<gene>
    <name evidence="1" type="primary">WDR59</name>
    <name evidence="6" type="ORF">RCJMB04_6d21</name>
</gene>
<accession>Q5ZLG9</accession>
<sequence>MAARWSSENVVVEFRDAQATAMSVDCLGQHAVLSGRRFLYIVNLDAPNEGHRKISRQSKWDIGAVQWNPHDSYAYYFAASSNQRVDLYKWKEGNGEVCTSLQGHTRVISDLDWSVFEPDLLVTSSVDTYIYIWDIKDTRKPTVSLSAVAGASQVKWNKKNANCLATSHDGDVRIWDKRKPSTAVEYLAAHLSKIHGLDWHPDNEYTLATSSQDNSVRFWDYRQPRKYLNILPCQVPVWKARYTPFSNGLVTVMVPQLRRENSLLLWNVFDLNTPVHTFVGHDDVVLEFQWRKQKEGSKDYQLVTWSRDQTLRMWRIDSQLQRLCANDILDGVDDLIDGISLLPEPDKALQPQDSEPQHSSGHGDEEALKEDFLNDLLVGKKTDQLGLPQTLQQEFSLINVQIRNVNVEMDAVNRSCTVSVHCGNHRVRMLVMFPVQYPNNAAPSFQFINPTSITASMKAKLLKILKDTSLQKVKRNQSCLEPCLRQLVSWLESVVNQEDSTSSNPYALPNSVTTPLPTFARVSNAYGSYQDSNIPFPRTSGARFCGAGYLVYFTRPMTMHRAVSPTEPTPRSLSALSAYHSGLITPMKIRTETPGNLRLYSGSPTRSEKEQVSISSFYYKERKSRRWKSKREGTDANNRPIKAAGKVIIQDISCLLPVHKLLGELYILNVNNIQETCQKNAASAMAVGRRDLVQVWSLAMVATDLCLGPKSDPDLEIPWAQHPFGRQLLESLLAHYSQLHDVQTLAMLCSVFEAQSRLQGCPNSYGPFPQRASNLASHSRYPSFTSSGSCSSMSDPGLGTGGWSIANKDTEQTSTPWCESSPDEFRYSNLMYPDHREREKDQHEKNKRLLDPANTQQFDDFKKCYGEILYRWGLREKRAEVLKFVSSPPDPHKGIEFGVYCSHCRSEARGTQCAICKGFTFQCAICHVAVRGSSNFCLTCGHGGHTSHMMEWFRTQEVCPTGCGCHCLLESTF</sequence>
<evidence type="ECO:0000250" key="1">
    <source>
        <dbReference type="UniProtKB" id="Q6PJI9"/>
    </source>
</evidence>
<evidence type="ECO:0000250" key="2">
    <source>
        <dbReference type="UniProtKB" id="Q8C0M0"/>
    </source>
</evidence>
<evidence type="ECO:0000255" key="3">
    <source>
        <dbReference type="PROSITE-ProRule" id="PRU00179"/>
    </source>
</evidence>
<evidence type="ECO:0000256" key="4">
    <source>
        <dbReference type="SAM" id="MobiDB-lite"/>
    </source>
</evidence>
<evidence type="ECO:0000305" key="5"/>
<evidence type="ECO:0000312" key="6">
    <source>
        <dbReference type="EMBL" id="CAG31424.1"/>
    </source>
</evidence>
<keyword id="KW-0458">Lysosome</keyword>
<keyword id="KW-0472">Membrane</keyword>
<keyword id="KW-0479">Metal-binding</keyword>
<keyword id="KW-1185">Reference proteome</keyword>
<keyword id="KW-0677">Repeat</keyword>
<keyword id="KW-0853">WD repeat</keyword>
<keyword id="KW-0862">Zinc</keyword>
<keyword id="KW-0863">Zinc-finger</keyword>